<evidence type="ECO:0000250" key="1"/>
<evidence type="ECO:0000255" key="2"/>
<evidence type="ECO:0000256" key="3">
    <source>
        <dbReference type="SAM" id="MobiDB-lite"/>
    </source>
</evidence>
<evidence type="ECO:0000305" key="4"/>
<evidence type="ECO:0000312" key="5">
    <source>
        <dbReference type="EMBL" id="EAZ40280.1"/>
    </source>
</evidence>
<comment type="function">
    <text evidence="1">Involved in a dynamic process of vesicle-mediated thylakoid membrane biogenesis. Required for the normal organization of vesicles into mature thylakoid stacks and ultimately for leaf development (By similarity).</text>
</comment>
<comment type="subcellular location">
    <subcellularLocation>
        <location>Plastid</location>
        <location>Chloroplast outer membrane</location>
        <topology>Single-pass membrane protein</topology>
    </subcellularLocation>
    <subcellularLocation>
        <location evidence="1">Plastid</location>
        <location evidence="1">Chloroplast stroma</location>
    </subcellularLocation>
</comment>
<comment type="similarity">
    <text evidence="4">Belongs to the THF1 family.</text>
</comment>
<organism>
    <name type="scientific">Oryza sativa subsp. japonica</name>
    <name type="common">Rice</name>
    <dbReference type="NCBI Taxonomy" id="39947"/>
    <lineage>
        <taxon>Eukaryota</taxon>
        <taxon>Viridiplantae</taxon>
        <taxon>Streptophyta</taxon>
        <taxon>Embryophyta</taxon>
        <taxon>Tracheophyta</taxon>
        <taxon>Spermatophyta</taxon>
        <taxon>Magnoliopsida</taxon>
        <taxon>Liliopsida</taxon>
        <taxon>Poales</taxon>
        <taxon>Poaceae</taxon>
        <taxon>BOP clade</taxon>
        <taxon>Oryzoideae</taxon>
        <taxon>Oryzeae</taxon>
        <taxon>Oryzinae</taxon>
        <taxon>Oryza</taxon>
        <taxon>Oryza sativa</taxon>
    </lineage>
</organism>
<reference key="1">
    <citation type="journal article" date="2003" name="Proc. Natl. Acad. Sci. U.S.A.">
        <title>A network of rice genes associated with stress response and seed development.</title>
        <authorList>
            <person name="Cooper B."/>
            <person name="Clarke J.D."/>
            <person name="Budworth P."/>
            <person name="Kreps J."/>
            <person name="Hutchison D."/>
            <person name="Park S."/>
            <person name="Guimil S."/>
            <person name="Dunn M."/>
            <person name="Luginbuehl P."/>
            <person name="Ellero C."/>
            <person name="Goff S.A."/>
            <person name="Glazebrook J."/>
        </authorList>
    </citation>
    <scope>NUCLEOTIDE SEQUENCE [MRNA]</scope>
</reference>
<reference key="2">
    <citation type="journal article" date="2005" name="Nature">
        <title>The map-based sequence of the rice genome.</title>
        <authorList>
            <consortium name="International rice genome sequencing project (IRGSP)"/>
        </authorList>
    </citation>
    <scope>NUCLEOTIDE SEQUENCE [LARGE SCALE GENOMIC DNA]</scope>
    <source>
        <strain>cv. Nipponbare</strain>
    </source>
</reference>
<reference key="3">
    <citation type="journal article" date="2008" name="Nucleic Acids Res.">
        <title>The rice annotation project database (RAP-DB): 2008 update.</title>
        <authorList>
            <consortium name="The rice annotation project (RAP)"/>
        </authorList>
    </citation>
    <scope>GENOME REANNOTATION</scope>
    <source>
        <strain>cv. Nipponbare</strain>
    </source>
</reference>
<reference key="4">
    <citation type="journal article" date="2013" name="Rice">
        <title>Improvement of the Oryza sativa Nipponbare reference genome using next generation sequence and optical map data.</title>
        <authorList>
            <person name="Kawahara Y."/>
            <person name="de la Bastide M."/>
            <person name="Hamilton J.P."/>
            <person name="Kanamori H."/>
            <person name="McCombie W.R."/>
            <person name="Ouyang S."/>
            <person name="Schwartz D.C."/>
            <person name="Tanaka T."/>
            <person name="Wu J."/>
            <person name="Zhou S."/>
            <person name="Childs K.L."/>
            <person name="Davidson R.M."/>
            <person name="Lin H."/>
            <person name="Quesada-Ocampo L."/>
            <person name="Vaillancourt B."/>
            <person name="Sakai H."/>
            <person name="Lee S.S."/>
            <person name="Kim J."/>
            <person name="Numa H."/>
            <person name="Itoh T."/>
            <person name="Buell C.R."/>
            <person name="Matsumoto T."/>
        </authorList>
    </citation>
    <scope>GENOME REANNOTATION</scope>
    <source>
        <strain>cv. Nipponbare</strain>
    </source>
</reference>
<reference key="5">
    <citation type="journal article" date="2005" name="PLoS Biol.">
        <title>The genomes of Oryza sativa: a history of duplications.</title>
        <authorList>
            <person name="Yu J."/>
            <person name="Wang J."/>
            <person name="Lin W."/>
            <person name="Li S."/>
            <person name="Li H."/>
            <person name="Zhou J."/>
            <person name="Ni P."/>
            <person name="Dong W."/>
            <person name="Hu S."/>
            <person name="Zeng C."/>
            <person name="Zhang J."/>
            <person name="Zhang Y."/>
            <person name="Li R."/>
            <person name="Xu Z."/>
            <person name="Li S."/>
            <person name="Li X."/>
            <person name="Zheng H."/>
            <person name="Cong L."/>
            <person name="Lin L."/>
            <person name="Yin J."/>
            <person name="Geng J."/>
            <person name="Li G."/>
            <person name="Shi J."/>
            <person name="Liu J."/>
            <person name="Lv H."/>
            <person name="Li J."/>
            <person name="Wang J."/>
            <person name="Deng Y."/>
            <person name="Ran L."/>
            <person name="Shi X."/>
            <person name="Wang X."/>
            <person name="Wu Q."/>
            <person name="Li C."/>
            <person name="Ren X."/>
            <person name="Wang J."/>
            <person name="Wang X."/>
            <person name="Li D."/>
            <person name="Liu D."/>
            <person name="Zhang X."/>
            <person name="Ji Z."/>
            <person name="Zhao W."/>
            <person name="Sun Y."/>
            <person name="Zhang Z."/>
            <person name="Bao J."/>
            <person name="Han Y."/>
            <person name="Dong L."/>
            <person name="Ji J."/>
            <person name="Chen P."/>
            <person name="Wu S."/>
            <person name="Liu J."/>
            <person name="Xiao Y."/>
            <person name="Bu D."/>
            <person name="Tan J."/>
            <person name="Yang L."/>
            <person name="Ye C."/>
            <person name="Zhang J."/>
            <person name="Xu J."/>
            <person name="Zhou Y."/>
            <person name="Yu Y."/>
            <person name="Zhang B."/>
            <person name="Zhuang S."/>
            <person name="Wei H."/>
            <person name="Liu B."/>
            <person name="Lei M."/>
            <person name="Yu H."/>
            <person name="Li Y."/>
            <person name="Xu H."/>
            <person name="Wei S."/>
            <person name="He X."/>
            <person name="Fang L."/>
            <person name="Zhang Z."/>
            <person name="Zhang Y."/>
            <person name="Huang X."/>
            <person name="Su Z."/>
            <person name="Tong W."/>
            <person name="Li J."/>
            <person name="Tong Z."/>
            <person name="Li S."/>
            <person name="Ye J."/>
            <person name="Wang L."/>
            <person name="Fang L."/>
            <person name="Lei T."/>
            <person name="Chen C.-S."/>
            <person name="Chen H.-C."/>
            <person name="Xu Z."/>
            <person name="Li H."/>
            <person name="Huang H."/>
            <person name="Zhang F."/>
            <person name="Xu H."/>
            <person name="Li N."/>
            <person name="Zhao C."/>
            <person name="Li S."/>
            <person name="Dong L."/>
            <person name="Huang Y."/>
            <person name="Li L."/>
            <person name="Xi Y."/>
            <person name="Qi Q."/>
            <person name="Li W."/>
            <person name="Zhang B."/>
            <person name="Hu W."/>
            <person name="Zhang Y."/>
            <person name="Tian X."/>
            <person name="Jiao Y."/>
            <person name="Liang X."/>
            <person name="Jin J."/>
            <person name="Gao L."/>
            <person name="Zheng W."/>
            <person name="Hao B."/>
            <person name="Liu S.-M."/>
            <person name="Wang W."/>
            <person name="Yuan L."/>
            <person name="Cao M."/>
            <person name="McDermott J."/>
            <person name="Samudrala R."/>
            <person name="Wang J."/>
            <person name="Wong G.K.-S."/>
            <person name="Yang H."/>
        </authorList>
    </citation>
    <scope>NUCLEOTIDE SEQUENCE [LARGE SCALE GENOMIC DNA]</scope>
    <source>
        <strain>cv. Nipponbare</strain>
    </source>
</reference>
<reference key="6">
    <citation type="journal article" date="2003" name="Science">
        <title>Collection, mapping, and annotation of over 28,000 cDNA clones from japonica rice.</title>
        <authorList>
            <consortium name="The rice full-length cDNA consortium"/>
        </authorList>
    </citation>
    <scope>NUCLEOTIDE SEQUENCE [LARGE SCALE MRNA]</scope>
    <source>
        <strain>cv. Nipponbare</strain>
    </source>
</reference>
<protein>
    <recommendedName>
        <fullName>Protein THYLAKOID FORMATION1, chloroplastic</fullName>
    </recommendedName>
</protein>
<feature type="transit peptide" description="Chloroplast" evidence="2">
    <location>
        <begin position="1"/>
        <end status="unknown"/>
    </location>
</feature>
<feature type="chain" id="PRO_0000235208" description="Protein THYLAKOID FORMATION1, chloroplastic">
    <location>
        <begin status="unknown"/>
        <end position="287"/>
    </location>
</feature>
<feature type="topological domain" description="Chloroplast intermembrane" evidence="2">
    <location>
        <begin position="1"/>
        <end position="190"/>
    </location>
</feature>
<feature type="transmembrane region" description="Helical" evidence="2">
    <location>
        <begin position="191"/>
        <end position="213"/>
    </location>
</feature>
<feature type="topological domain" description="Cytoplasmic" evidence="2">
    <location>
        <begin position="214"/>
        <end position="287"/>
    </location>
</feature>
<feature type="region of interest" description="Disordered" evidence="3">
    <location>
        <begin position="256"/>
        <end position="287"/>
    </location>
</feature>
<feature type="coiled-coil region" evidence="2">
    <location>
        <begin position="237"/>
        <end position="267"/>
    </location>
</feature>
<feature type="compositionally biased region" description="Basic and acidic residues" evidence="3">
    <location>
        <begin position="256"/>
        <end position="270"/>
    </location>
</feature>
<proteinExistence type="evidence at transcript level"/>
<gene>
    <name type="primary">THF1</name>
    <name type="ordered locus">Os07g0558500</name>
    <name type="ordered locus">LOC_Os07g37250</name>
    <name evidence="5" type="ORF">OsJ_24722</name>
    <name type="ORF">P0567H04.15-1</name>
</gene>
<accession>Q84PB7</accession>
<accession>Q0D5I3</accession>
<name>THF1_ORYSJ</name>
<keyword id="KW-0150">Chloroplast</keyword>
<keyword id="KW-0175">Coiled coil</keyword>
<keyword id="KW-0472">Membrane</keyword>
<keyword id="KW-0934">Plastid</keyword>
<keyword id="KW-1002">Plastid outer membrane</keyword>
<keyword id="KW-1185">Reference proteome</keyword>
<keyword id="KW-0809">Transit peptide</keyword>
<keyword id="KW-0812">Transmembrane</keyword>
<keyword id="KW-1133">Transmembrane helix</keyword>
<dbReference type="EMBL" id="AY224446">
    <property type="protein sequence ID" value="AAO72565.1"/>
    <property type="molecule type" value="mRNA"/>
</dbReference>
<dbReference type="EMBL" id="AP005195">
    <property type="protein sequence ID" value="BAC84034.1"/>
    <property type="molecule type" value="Genomic_DNA"/>
</dbReference>
<dbReference type="EMBL" id="AP008213">
    <property type="protein sequence ID" value="BAF21890.1"/>
    <property type="molecule type" value="Genomic_DNA"/>
</dbReference>
<dbReference type="EMBL" id="AP014963">
    <property type="protein sequence ID" value="BAT02123.1"/>
    <property type="molecule type" value="Genomic_DNA"/>
</dbReference>
<dbReference type="EMBL" id="CM000144">
    <property type="protein sequence ID" value="EAZ40280.1"/>
    <property type="molecule type" value="Genomic_DNA"/>
</dbReference>
<dbReference type="EMBL" id="AK064914">
    <property type="protein sequence ID" value="BAG89278.1"/>
    <property type="molecule type" value="mRNA"/>
</dbReference>
<dbReference type="RefSeq" id="XP_015646911.1">
    <property type="nucleotide sequence ID" value="XM_015791425.1"/>
</dbReference>
<dbReference type="SMR" id="Q84PB7"/>
<dbReference type="FunCoup" id="Q84PB7">
    <property type="interactions" value="1480"/>
</dbReference>
<dbReference type="IntAct" id="Q84PB7">
    <property type="interactions" value="4"/>
</dbReference>
<dbReference type="STRING" id="39947.Q84PB7"/>
<dbReference type="PaxDb" id="39947-Q84PB7"/>
<dbReference type="EnsemblPlants" id="Os07t0558500-01">
    <property type="protein sequence ID" value="Os07t0558500-01"/>
    <property type="gene ID" value="Os07g0558500"/>
</dbReference>
<dbReference type="Gramene" id="Os07t0558500-01">
    <property type="protein sequence ID" value="Os07t0558500-01"/>
    <property type="gene ID" value="Os07g0558500"/>
</dbReference>
<dbReference type="KEGG" id="dosa:Os07g0558500"/>
<dbReference type="eggNOG" id="ENOG502QUQV">
    <property type="taxonomic scope" value="Eukaryota"/>
</dbReference>
<dbReference type="HOGENOM" id="CLU_079763_0_1_1"/>
<dbReference type="InParanoid" id="Q84PB7"/>
<dbReference type="OMA" id="MVEMHLL"/>
<dbReference type="OrthoDB" id="4812at2759"/>
<dbReference type="Proteomes" id="UP000000763">
    <property type="component" value="Chromosome 7"/>
</dbReference>
<dbReference type="Proteomes" id="UP000007752">
    <property type="component" value="Chromosome 7"/>
</dbReference>
<dbReference type="Proteomes" id="UP000059680">
    <property type="component" value="Chromosome 7"/>
</dbReference>
<dbReference type="ExpressionAtlas" id="Q84PB7">
    <property type="expression patterns" value="baseline and differential"/>
</dbReference>
<dbReference type="GO" id="GO:0009707">
    <property type="term" value="C:chloroplast outer membrane"/>
    <property type="evidence" value="ECO:0007669"/>
    <property type="project" value="UniProtKB-SubCell"/>
</dbReference>
<dbReference type="GO" id="GO:0009570">
    <property type="term" value="C:chloroplast stroma"/>
    <property type="evidence" value="ECO:0007669"/>
    <property type="project" value="UniProtKB-SubCell"/>
</dbReference>
<dbReference type="GO" id="GO:0010207">
    <property type="term" value="P:photosystem II assembly"/>
    <property type="evidence" value="ECO:0007669"/>
    <property type="project" value="InterPro"/>
</dbReference>
<dbReference type="GO" id="GO:0045037">
    <property type="term" value="P:protein import into chloroplast stroma"/>
    <property type="evidence" value="ECO:0000318"/>
    <property type="project" value="GO_Central"/>
</dbReference>
<dbReference type="GO" id="GO:0045038">
    <property type="term" value="P:protein import into chloroplast thylakoid membrane"/>
    <property type="evidence" value="ECO:0000318"/>
    <property type="project" value="GO_Central"/>
</dbReference>
<dbReference type="GO" id="GO:0010027">
    <property type="term" value="P:thylakoid membrane organization"/>
    <property type="evidence" value="ECO:0000318"/>
    <property type="project" value="GO_Central"/>
</dbReference>
<dbReference type="HAMAP" id="MF_01843">
    <property type="entry name" value="Thf1"/>
    <property type="match status" value="1"/>
</dbReference>
<dbReference type="InterPro" id="IPR017499">
    <property type="entry name" value="Thf1"/>
</dbReference>
<dbReference type="NCBIfam" id="TIGR03060">
    <property type="entry name" value="PS_II_psb29"/>
    <property type="match status" value="1"/>
</dbReference>
<dbReference type="PANTHER" id="PTHR34793">
    <property type="entry name" value="PROTEIN THYLAKOID FORMATION 1, CHLOROPLASTIC"/>
    <property type="match status" value="1"/>
</dbReference>
<dbReference type="PANTHER" id="PTHR34793:SF1">
    <property type="entry name" value="PROTEIN THYLAKOID FORMATION 1, CHLOROPLASTIC"/>
    <property type="match status" value="1"/>
</dbReference>
<dbReference type="Pfam" id="PF11264">
    <property type="entry name" value="ThylakoidFormat"/>
    <property type="match status" value="1"/>
</dbReference>
<sequence>MAAISSLPFAALRRAADCRPSTAAAAAGAGAGAVVLSVRPRRGSRSVVRCVATAGDVPPTVAETKMNFLKSYKRPILSIYSTVLQELLVQQHLMRYKTTYQYDAVFALGFVTVYDQLMEGYPSNEDRDAIFKAYITALNEDPEQYRADAQKMEEWARSQNGNSLVEFSSKDGEIEAILKDISERAQGKGSFSYSRFFAVGLFRLLELANATEPTILDKLCAALNINKRSVDRDLDVYRNILSKLVQAKELLKEYVEREKKKREERSETPKSNEAVTKFDGSLNSMRH</sequence>